<evidence type="ECO:0000255" key="1"/>
<evidence type="ECO:0000255" key="2">
    <source>
        <dbReference type="PROSITE-ProRule" id="PRU00086"/>
    </source>
</evidence>
<evidence type="ECO:0000269" key="3">
    <source>
    </source>
</evidence>
<evidence type="ECO:0000269" key="4">
    <source>
    </source>
</evidence>
<evidence type="ECO:0000269" key="5">
    <source>
    </source>
</evidence>
<evidence type="ECO:0000269" key="6">
    <source>
    </source>
</evidence>
<evidence type="ECO:0000269" key="7">
    <source>
    </source>
</evidence>
<evidence type="ECO:0000269" key="8">
    <source>
    </source>
</evidence>
<evidence type="ECO:0000269" key="9">
    <source>
    </source>
</evidence>
<evidence type="ECO:0000269" key="10">
    <source>
    </source>
</evidence>
<evidence type="ECO:0000269" key="11">
    <source>
    </source>
</evidence>
<evidence type="ECO:0000269" key="12">
    <source>
    </source>
</evidence>
<evidence type="ECO:0000269" key="13">
    <source>
    </source>
</evidence>
<evidence type="ECO:0000269" key="14">
    <source>
    </source>
</evidence>
<evidence type="ECO:0000269" key="15">
    <source>
    </source>
</evidence>
<evidence type="ECO:0000269" key="16">
    <source>
    </source>
</evidence>
<evidence type="ECO:0000269" key="17">
    <source>
    </source>
</evidence>
<evidence type="ECO:0000269" key="18">
    <source>
    </source>
</evidence>
<evidence type="ECO:0000269" key="19">
    <source>
    </source>
</evidence>
<evidence type="ECO:0000305" key="20"/>
<protein>
    <recommendedName>
        <fullName>Zeaxanthin epoxidase, chloroplastic</fullName>
        <shortName>AtZEP</shortName>
        <ecNumber>1.14.15.21</ecNumber>
    </recommendedName>
    <alternativeName>
        <fullName>Protein ABA DEFICIENT 1</fullName>
        <shortName>AtABA1</shortName>
    </alternativeName>
    <alternativeName>
        <fullName>Protein IMPAIRED IN BABA-INDUCED STERILITY 3</fullName>
    </alternativeName>
    <alternativeName>
        <fullName>Protein LOW EXPRESSION OF OSMOTIC STRESS-RESPONSIVE GENES 6</fullName>
    </alternativeName>
    <alternativeName>
        <fullName>Protein NON-PHOTOCHEMICAL QUENCHING 2</fullName>
    </alternativeName>
</protein>
<comment type="function">
    <text evidence="5 7 8 9 10 11 12 13 15 16 17 18 19">Zeaxanthin epoxidase that plays an important role in the xanthophyll cycle and abscisic acid (ABA) biosynthesis. Converts zeaxanthin into antheraxanthin and subsequently violaxanthin. Required for resistance to osmotic and drought stresses, ABA-dependent stomatal closure, seed development and dormancy, modulation of defense gene expression and disease resistance and non-photochemical quencing (NPQ). Through its role in ABA biosynthesis, regulates the expression of stress-responsive genes such as RD29A during osmotic stress and is required for normal plant growth during vegetative development. Is required for late skotomorphogenic growth through its role in the xanthophyll carotenoids neoxanthin, violaxanthin and antheraxanthin biosynthesis. Required for beta-aminobutyric acid (BABA)-induced priming in disease resistance, tolerance to salt and drought stresses and sterility. Participates in NPQ by regulating the level of zeaxanthin in photosynthetic energy conversion. NPQ is a process that maintains the balance between dissipation and utilization of light energy to minimize the generation of oxidizing molecules and the molecular damages they can generate.</text>
</comment>
<comment type="catalytic activity">
    <reaction>
        <text>all-trans-zeaxanthin + 4 reduced [2Fe-2S]-[ferredoxin] + 2 O2 + 4 H(+) = all-trans-violaxanthin + 4 oxidized [2Fe-2S]-[ferredoxin] + 2 H2O</text>
        <dbReference type="Rhea" id="RHEA:32443"/>
        <dbReference type="Rhea" id="RHEA-COMP:10000"/>
        <dbReference type="Rhea" id="RHEA-COMP:10001"/>
        <dbReference type="ChEBI" id="CHEBI:15377"/>
        <dbReference type="ChEBI" id="CHEBI:15378"/>
        <dbReference type="ChEBI" id="CHEBI:15379"/>
        <dbReference type="ChEBI" id="CHEBI:27547"/>
        <dbReference type="ChEBI" id="CHEBI:33737"/>
        <dbReference type="ChEBI" id="CHEBI:33738"/>
        <dbReference type="ChEBI" id="CHEBI:35288"/>
        <dbReference type="EC" id="1.14.15.21"/>
    </reaction>
</comment>
<comment type="cofactor">
    <cofactor evidence="20">
        <name>FAD</name>
        <dbReference type="ChEBI" id="CHEBI:57692"/>
    </cofactor>
</comment>
<comment type="pathway">
    <text>Plant hormone biosynthesis; abscisate biosynthesis.</text>
</comment>
<comment type="subcellular location">
    <subcellularLocation>
        <location evidence="1">Plastid</location>
        <location evidence="1">Chloroplast</location>
    </subcellularLocation>
</comment>
<comment type="alternative products">
    <event type="alternative splicing"/>
    <isoform>
        <id>Q9FGC7-1</id>
        <name>1</name>
        <sequence type="displayed"/>
    </isoform>
    <isoform>
        <id>Q9FGC7-2</id>
        <name>2</name>
        <sequence type="described" ref="VSP_041638 VSP_041639"/>
    </isoform>
</comment>
<comment type="tissue specificity">
    <text evidence="5">Expressed in leaves, stems and flowers, and at lower levels in roots and siliques.</text>
</comment>
<comment type="induction">
    <text evidence="5">By ABA and drought, salt and osmotic stresses.</text>
</comment>
<comment type="disruption phenotype">
    <text evidence="3 4 5 6 10 11 12 14">Increased endogenous level of zeaxanthin and reduced level of ABA. Reduced size of leaves, inflorescences and flowers, early flowering, increased number of wilted plants, premature seed germination and reduced osmotic water permeability and ability to close stomata. Reduced susceptibility to virulent isolates of P.parasitica and sensitivity to BABA-induced priming.</text>
</comment>
<comment type="miscellaneous">
    <text>Plants overexpressing ZEP show increased levels of violaxanthin and ABA and increased tolerance to salt and drought stresses.</text>
</comment>
<comment type="sequence caution" evidence="20">
    <conflict type="miscellaneous discrepancy">
        <sequence resource="EMBL-CDS" id="AAL91193"/>
    </conflict>
    <text>Intron retention.</text>
</comment>
<comment type="sequence caution" evidence="20">
    <conflict type="miscellaneous discrepancy">
        <sequence resource="EMBL-CDS" id="AAO00920"/>
    </conflict>
    <text>Intron retention.</text>
</comment>
<organism>
    <name type="scientific">Arabidopsis thaliana</name>
    <name type="common">Mouse-ear cress</name>
    <dbReference type="NCBI Taxonomy" id="3702"/>
    <lineage>
        <taxon>Eukaryota</taxon>
        <taxon>Viridiplantae</taxon>
        <taxon>Streptophyta</taxon>
        <taxon>Embryophyta</taxon>
        <taxon>Tracheophyta</taxon>
        <taxon>Spermatophyta</taxon>
        <taxon>Magnoliopsida</taxon>
        <taxon>eudicotyledons</taxon>
        <taxon>Gunneridae</taxon>
        <taxon>Pentapetalae</taxon>
        <taxon>rosids</taxon>
        <taxon>malvids</taxon>
        <taxon>Brassicales</taxon>
        <taxon>Brassicaceae</taxon>
        <taxon>Camelineae</taxon>
        <taxon>Arabidopsis</taxon>
    </lineage>
</organism>
<feature type="transit peptide" description="Chloroplast" evidence="1">
    <location>
        <begin position="1"/>
        <end position="59"/>
    </location>
</feature>
<feature type="chain" id="PRO_0000412072" description="Zeaxanthin epoxidase, chloroplastic">
    <location>
        <begin position="60"/>
        <end position="667"/>
    </location>
</feature>
<feature type="domain" description="FHA" evidence="2">
    <location>
        <begin position="558"/>
        <end position="612"/>
    </location>
</feature>
<feature type="binding site" evidence="1">
    <location>
        <begin position="82"/>
        <end position="110"/>
    </location>
    <ligand>
        <name>FAD</name>
        <dbReference type="ChEBI" id="CHEBI:57692"/>
    </ligand>
</feature>
<feature type="binding site" evidence="1">
    <location>
        <begin position="360"/>
        <end position="373"/>
    </location>
    <ligand>
        <name>FAD</name>
        <dbReference type="ChEBI" id="CHEBI:57692"/>
    </ligand>
</feature>
<feature type="splice variant" id="VSP_041638" description="In isoform 2." evidence="20">
    <original>SKMHARVIYKDGAFFLMDLRSEHGTYVTDN</original>
    <variation>YKLYACSCDLQRRSFLLDGSSKRTRNLCDR</variation>
    <location>
        <begin position="581"/>
        <end position="610"/>
    </location>
</feature>
<feature type="splice variant" id="VSP_041639" description="In isoform 2." evidence="20">
    <location>
        <begin position="611"/>
        <end position="667"/>
    </location>
</feature>
<feature type="mutagenesis site" description="In aba1-3; ABA-deficient phenotype.">
    <original>P</original>
    <variation>A</variation>
    <location>
        <position position="125"/>
    </location>
</feature>
<feature type="mutagenesis site" description="In aba1-6; ABA-deficient phenotype.">
    <original>G</original>
    <variation>S</variation>
    <location>
        <position position="160"/>
    </location>
</feature>
<feature type="mutagenesis site" description="In los6; reduces plant size, accelerates flowering and increases transpirational water loss." evidence="5">
    <original>G</original>
    <variation>E</variation>
    <location>
        <position position="386"/>
    </location>
</feature>
<feature type="sequence conflict" description="In Ref. 3; AAG17703/AAG38877." evidence="20" ref="3">
    <original>S</original>
    <variation>A</variation>
    <location>
        <position position="29"/>
    </location>
</feature>
<feature type="sequence conflict" description="In Ref. 3; AAG17703/AAG38877." evidence="20" ref="3">
    <original>KPGGVSGFRSRRA</original>
    <variation>RSGGGLSVFRSRKT</variation>
    <location>
        <begin position="42"/>
        <end position="54"/>
    </location>
</feature>
<feature type="sequence conflict" description="In Ref. 2; AAF82390/AAF82391." evidence="20" ref="2">
    <original>E</original>
    <variation>D</variation>
    <location>
        <position position="76"/>
    </location>
</feature>
<feature type="sequence conflict" description="In Ref. 3; AAG17703/AAG38877." evidence="20" ref="3">
    <location>
        <position position="77"/>
    </location>
</feature>
<feature type="sequence conflict" description="In Ref. 2; AAF82390/AAF82391." evidence="20" ref="2">
    <original>I</original>
    <variation>M</variation>
    <location>
        <position position="116"/>
    </location>
</feature>
<feature type="sequence conflict" description="In Ref. 2; AAF82390/AAF82391." evidence="20" ref="2">
    <original>ASR</original>
    <variation>GVT</variation>
    <location>
        <begin position="180"/>
        <end position="182"/>
    </location>
</feature>
<feature type="sequence conflict" description="In Ref. 1; BAB11935." evidence="20" ref="1">
    <original>T</original>
    <variation>I</variation>
    <location>
        <position position="194"/>
    </location>
</feature>
<sequence>MGSTPFCYSINPSPSKLDFTRTHVFSPVSKQFYLDLSSFSGKPGGVSGFRSRRALLGVKAATALVEKEEKREAVTEKKKKSRVLVAGGGIGGLVFALAAKKKGFDVLVFEKDLSAIRGEGKYRGPIQIQSNALAALEAIDIEVAEQVMEAGCITGDRINGLVDGISGTWYVKFDTFTPAASRGLPVTRVISRMTLQQILARAVGEDVIRNESNVVDFEDSGDKVTVVLENGQRYEGDLLVGADGIWSKVRNNLFGRSEATYSGYTCYTGIADFIPADIESVGYRVFLGHKQYFVSSDVGGGKMQWYAFHEEPAGGADAPNGMKKRLFEIFDGWCDNVLDLLHATEEEAILRRDIYDRSPGFTWGKGRVTLLGDSIHAMQPNMGQGGCMAIEDSFQLALELDEAWKQSVETTTPVDVVSSLKRYEESRRLRVAIIHAMARMAAIMASTYKAYLGVGLGPLSFLTKFRVPHPGRVGGRFFVDIAMPSMLDWVLGGNSEKLQGRPPSCRLTDKADDRLREWFEDDDALERTIKGEWYLIPHGDDCCVSETLCLTKDEDQPCIVGSEPDQDFPGMRIVIPSSQVSKMHARVIYKDGAFFLMDLRSEHGTYVTDNEGRRYRATPNFPARFRSSDIIEFGSDKKAAFRVKVIRKTPKSTRKNESNNDKLLQTA</sequence>
<accession>Q9FGC7</accession>
<accession>F4K278</accession>
<accession>Q8RXE6</accession>
<accession>Q9FDX0</accession>
<accession>Q9FS21</accession>
<accession>Q9LDB9</accession>
<gene>
    <name type="primary">ZEP</name>
    <name type="synonym">ABA1</name>
    <name type="synonym">IBS3</name>
    <name type="synonym">LOS6</name>
    <name type="synonym">NPQ2</name>
    <name type="ordered locus">At5g67030</name>
    <name type="ORF">K8A10.10</name>
</gene>
<dbReference type="EC" id="1.14.15.21"/>
<dbReference type="EMBL" id="AB030296">
    <property type="protein sequence ID" value="BAB11935.1"/>
    <property type="molecule type" value="mRNA"/>
</dbReference>
<dbReference type="EMBL" id="AF134577">
    <property type="protein sequence ID" value="AAF82390.1"/>
    <property type="molecule type" value="Genomic_DNA"/>
</dbReference>
<dbReference type="EMBL" id="AF134578">
    <property type="protein sequence ID" value="AAF82391.1"/>
    <property type="molecule type" value="mRNA"/>
</dbReference>
<dbReference type="EMBL" id="AF281655">
    <property type="protein sequence ID" value="AAG17703.1"/>
    <property type="molecule type" value="mRNA"/>
</dbReference>
<dbReference type="EMBL" id="AF283761">
    <property type="protein sequence ID" value="AAG38877.1"/>
    <property type="molecule type" value="Genomic_DNA"/>
</dbReference>
<dbReference type="EMBL" id="AB026640">
    <property type="protein sequence ID" value="BAB08942.1"/>
    <property type="molecule type" value="Genomic_DNA"/>
</dbReference>
<dbReference type="EMBL" id="CP002688">
    <property type="protein sequence ID" value="AED98292.1"/>
    <property type="molecule type" value="Genomic_DNA"/>
</dbReference>
<dbReference type="EMBL" id="CP002688">
    <property type="protein sequence ID" value="AED98293.1"/>
    <property type="molecule type" value="Genomic_DNA"/>
</dbReference>
<dbReference type="EMBL" id="AY081304">
    <property type="protein sequence ID" value="AAL91193.1"/>
    <property type="status" value="ALT_SEQ"/>
    <property type="molecule type" value="mRNA"/>
</dbReference>
<dbReference type="EMBL" id="AY093145">
    <property type="protein sequence ID" value="AAM13144.1"/>
    <property type="molecule type" value="mRNA"/>
</dbReference>
<dbReference type="EMBL" id="BT002560">
    <property type="protein sequence ID" value="AAO00920.1"/>
    <property type="status" value="ALT_SEQ"/>
    <property type="molecule type" value="mRNA"/>
</dbReference>
<dbReference type="RefSeq" id="NP_201504.2">
    <molecule id="Q9FGC7-2"/>
    <property type="nucleotide sequence ID" value="NM_126103.2"/>
</dbReference>
<dbReference type="RefSeq" id="NP_851285.1">
    <molecule id="Q9FGC7-1"/>
    <property type="nucleotide sequence ID" value="NM_180954.3"/>
</dbReference>
<dbReference type="SMR" id="Q9FGC7"/>
<dbReference type="FunCoup" id="Q9FGC7">
    <property type="interactions" value="296"/>
</dbReference>
<dbReference type="STRING" id="3702.Q9FGC7"/>
<dbReference type="iPTMnet" id="Q9FGC7"/>
<dbReference type="PaxDb" id="3702-AT5G67030.1"/>
<dbReference type="ProteomicsDB" id="242947">
    <molecule id="Q9FGC7-1"/>
</dbReference>
<dbReference type="EnsemblPlants" id="AT5G67030.1">
    <molecule id="Q9FGC7-1"/>
    <property type="protein sequence ID" value="AT5G67030.1"/>
    <property type="gene ID" value="AT5G67030"/>
</dbReference>
<dbReference type="EnsemblPlants" id="AT5G67030.2">
    <molecule id="Q9FGC7-2"/>
    <property type="protein sequence ID" value="AT5G67030.2"/>
    <property type="gene ID" value="AT5G67030"/>
</dbReference>
<dbReference type="GeneID" id="836838"/>
<dbReference type="Gramene" id="AT5G67030.1">
    <molecule id="Q9FGC7-1"/>
    <property type="protein sequence ID" value="AT5G67030.1"/>
    <property type="gene ID" value="AT5G67030"/>
</dbReference>
<dbReference type="Gramene" id="AT5G67030.2">
    <molecule id="Q9FGC7-2"/>
    <property type="protein sequence ID" value="AT5G67030.2"/>
    <property type="gene ID" value="AT5G67030"/>
</dbReference>
<dbReference type="KEGG" id="ath:AT5G67030"/>
<dbReference type="Araport" id="AT5G67030"/>
<dbReference type="TAIR" id="AT5G67030">
    <property type="gene designation" value="ABA1"/>
</dbReference>
<dbReference type="eggNOG" id="KOG2614">
    <property type="taxonomic scope" value="Eukaryota"/>
</dbReference>
<dbReference type="HOGENOM" id="CLU_009665_16_1_1"/>
<dbReference type="InParanoid" id="Q9FGC7"/>
<dbReference type="OMA" id="CKDNAFY"/>
<dbReference type="PhylomeDB" id="Q9FGC7"/>
<dbReference type="BioCyc" id="MetaCyc:AT5G67030-MONOMER"/>
<dbReference type="BRENDA" id="1.14.15.21">
    <property type="organism ID" value="399"/>
</dbReference>
<dbReference type="UniPathway" id="UPA00090"/>
<dbReference type="PRO" id="PR:Q9FGC7"/>
<dbReference type="Proteomes" id="UP000006548">
    <property type="component" value="Chromosome 5"/>
</dbReference>
<dbReference type="ExpressionAtlas" id="Q9FGC7">
    <property type="expression patterns" value="baseline and differential"/>
</dbReference>
<dbReference type="GO" id="GO:0009507">
    <property type="term" value="C:chloroplast"/>
    <property type="evidence" value="ECO:0007005"/>
    <property type="project" value="TAIR"/>
</dbReference>
<dbReference type="GO" id="GO:0009941">
    <property type="term" value="C:chloroplast envelope"/>
    <property type="evidence" value="ECO:0007005"/>
    <property type="project" value="TAIR"/>
</dbReference>
<dbReference type="GO" id="GO:0016020">
    <property type="term" value="C:membrane"/>
    <property type="evidence" value="ECO:0007669"/>
    <property type="project" value="InterPro"/>
</dbReference>
<dbReference type="GO" id="GO:0009536">
    <property type="term" value="C:plastid"/>
    <property type="evidence" value="ECO:0007005"/>
    <property type="project" value="TAIR"/>
</dbReference>
<dbReference type="GO" id="GO:0071949">
    <property type="term" value="F:FAD binding"/>
    <property type="evidence" value="ECO:0007669"/>
    <property type="project" value="InterPro"/>
</dbReference>
<dbReference type="GO" id="GO:0052662">
    <property type="term" value="F:zeaxanthin epoxidase activity"/>
    <property type="evidence" value="ECO:0007669"/>
    <property type="project" value="UniProtKB-EC"/>
</dbReference>
<dbReference type="GO" id="GO:0009688">
    <property type="term" value="P:abscisic acid biosynthetic process"/>
    <property type="evidence" value="ECO:0000304"/>
    <property type="project" value="TAIR"/>
</dbReference>
<dbReference type="GO" id="GO:0009408">
    <property type="term" value="P:response to heat"/>
    <property type="evidence" value="ECO:0000315"/>
    <property type="project" value="TAIR"/>
</dbReference>
<dbReference type="GO" id="GO:0010114">
    <property type="term" value="P:response to red light"/>
    <property type="evidence" value="ECO:0000270"/>
    <property type="project" value="TAIR"/>
</dbReference>
<dbReference type="GO" id="GO:0009414">
    <property type="term" value="P:response to water deprivation"/>
    <property type="evidence" value="ECO:0000315"/>
    <property type="project" value="TAIR"/>
</dbReference>
<dbReference type="GO" id="GO:0010182">
    <property type="term" value="P:sugar mediated signaling pathway"/>
    <property type="evidence" value="ECO:0000304"/>
    <property type="project" value="TAIR"/>
</dbReference>
<dbReference type="GO" id="GO:0016123">
    <property type="term" value="P:xanthophyll biosynthetic process"/>
    <property type="evidence" value="ECO:0000315"/>
    <property type="project" value="TAIR"/>
</dbReference>
<dbReference type="CDD" id="cd22702">
    <property type="entry name" value="FHA_ZEP-like"/>
    <property type="match status" value="1"/>
</dbReference>
<dbReference type="FunFam" id="2.60.200.20:FF:000048">
    <property type="entry name" value="Zeaxanthin epoxidase, chloroplastic"/>
    <property type="match status" value="1"/>
</dbReference>
<dbReference type="FunFam" id="3.50.50.60:FF:000263">
    <property type="entry name" value="Zeaxanthin epoxidase, chloroplastic"/>
    <property type="match status" value="1"/>
</dbReference>
<dbReference type="Gene3D" id="2.60.200.20">
    <property type="match status" value="1"/>
</dbReference>
<dbReference type="Gene3D" id="3.50.50.60">
    <property type="entry name" value="FAD/NAD(P)-binding domain"/>
    <property type="match status" value="1"/>
</dbReference>
<dbReference type="InterPro" id="IPR002938">
    <property type="entry name" value="FAD-bd"/>
</dbReference>
<dbReference type="InterPro" id="IPR036188">
    <property type="entry name" value="FAD/NAD-bd_sf"/>
</dbReference>
<dbReference type="InterPro" id="IPR000253">
    <property type="entry name" value="FHA_dom"/>
</dbReference>
<dbReference type="InterPro" id="IPR008984">
    <property type="entry name" value="SMAD_FHA_dom_sf"/>
</dbReference>
<dbReference type="InterPro" id="IPR017079">
    <property type="entry name" value="Zeaxanthin_epoxidase"/>
</dbReference>
<dbReference type="PANTHER" id="PTHR46496">
    <property type="match status" value="1"/>
</dbReference>
<dbReference type="PANTHER" id="PTHR46496:SF1">
    <property type="entry name" value="ZEAXANTHIN EPOXIDASE, CHLOROPLASTIC"/>
    <property type="match status" value="1"/>
</dbReference>
<dbReference type="Pfam" id="PF01494">
    <property type="entry name" value="FAD_binding_3"/>
    <property type="match status" value="2"/>
</dbReference>
<dbReference type="Pfam" id="PF00498">
    <property type="entry name" value="FHA"/>
    <property type="match status" value="1"/>
</dbReference>
<dbReference type="PIRSF" id="PIRSF036989">
    <property type="entry name" value="Zeaxanthin_epoxidase"/>
    <property type="match status" value="1"/>
</dbReference>
<dbReference type="PRINTS" id="PR00420">
    <property type="entry name" value="RNGMNOXGNASE"/>
</dbReference>
<dbReference type="SMART" id="SM00240">
    <property type="entry name" value="FHA"/>
    <property type="match status" value="1"/>
</dbReference>
<dbReference type="SUPFAM" id="SSF51905">
    <property type="entry name" value="FAD/NAD(P)-binding domain"/>
    <property type="match status" value="1"/>
</dbReference>
<dbReference type="SUPFAM" id="SSF49879">
    <property type="entry name" value="SMAD/FHA domain"/>
    <property type="match status" value="1"/>
</dbReference>
<dbReference type="PROSITE" id="PS50006">
    <property type="entry name" value="FHA_DOMAIN"/>
    <property type="match status" value="1"/>
</dbReference>
<keyword id="KW-0937">Abscisic acid biosynthesis</keyword>
<keyword id="KW-0025">Alternative splicing</keyword>
<keyword id="KW-0150">Chloroplast</keyword>
<keyword id="KW-0274">FAD</keyword>
<keyword id="KW-0285">Flavoprotein</keyword>
<keyword id="KW-0560">Oxidoreductase</keyword>
<keyword id="KW-0934">Plastid</keyword>
<keyword id="KW-1185">Reference proteome</keyword>
<keyword id="KW-0346">Stress response</keyword>
<keyword id="KW-0809">Transit peptide</keyword>
<reference key="1">
    <citation type="journal article" date="2000" name="Plant Physiol.">
        <title>A stress-inducible gene for 9-cis-epoxycarotenoid dioxygenase involved in abscisic acid biosynthesis under water stress in drought-tolerant cowpea.</title>
        <authorList>
            <person name="Iuchi S."/>
            <person name="Kobayashi M."/>
            <person name="Yamaguchi-Shinozaki K."/>
            <person name="Shinozaki K."/>
        </authorList>
    </citation>
    <scope>NUCLEOTIDE SEQUENCE [MRNA]</scope>
</reference>
<reference key="2">
    <citation type="submission" date="1999-03" db="EMBL/GenBank/DDBJ databases">
        <title>Gene structure and regulation of the carotenoid biosynthesis pathway in Arabidopsis thaliana.</title>
        <authorList>
            <person name="Giuliano G."/>
            <person name="Rosati C."/>
            <person name="Santangelo G."/>
            <person name="Nebuloso E."/>
        </authorList>
    </citation>
    <scope>NUCLEOTIDE SEQUENCE [GENOMIC DNA / MRNA]</scope>
</reference>
<reference key="3">
    <citation type="submission" date="2000-06" db="EMBL/GenBank/DDBJ databases">
        <title>Localization and expression of Arabidopsis thaliana zeaxanthin epoxidase: contribution to the regulation of ABA biosynthesis in response to drought stress and during seed development.</title>
        <authorList>
            <person name="Audran C."/>
            <person name="Liotenberg S."/>
            <person name="Gonneau M."/>
            <person name="North H."/>
            <person name="Frey A."/>
            <person name="Tap-Waksman K."/>
            <person name="Vartanian N."/>
            <person name="Marion-Poll A."/>
        </authorList>
    </citation>
    <scope>NUCLEOTIDE SEQUENCE [GENOMIC DNA / MRNA]</scope>
    <source>
        <strain>cv. Landsberg erecta</strain>
        <tissue>Seedling</tissue>
    </source>
</reference>
<reference key="4">
    <citation type="submission" date="1999-04" db="EMBL/GenBank/DDBJ databases">
        <title>Structural analysis of Arabidopsis thaliana chromosome 5. XI.</title>
        <authorList>
            <person name="Kaneko T."/>
            <person name="Katoh T."/>
            <person name="Asamizu E."/>
            <person name="Sato S."/>
            <person name="Nakamura Y."/>
            <person name="Kotani H."/>
            <person name="Tabata S."/>
        </authorList>
    </citation>
    <scope>NUCLEOTIDE SEQUENCE [LARGE SCALE GENOMIC DNA]</scope>
    <source>
        <strain>cv. Columbia</strain>
    </source>
</reference>
<reference key="5">
    <citation type="journal article" date="2017" name="Plant J.">
        <title>Araport11: a complete reannotation of the Arabidopsis thaliana reference genome.</title>
        <authorList>
            <person name="Cheng C.Y."/>
            <person name="Krishnakumar V."/>
            <person name="Chan A.P."/>
            <person name="Thibaud-Nissen F."/>
            <person name="Schobel S."/>
            <person name="Town C.D."/>
        </authorList>
    </citation>
    <scope>GENOME REANNOTATION</scope>
    <source>
        <strain>cv. Columbia</strain>
    </source>
</reference>
<reference key="6">
    <citation type="journal article" date="2003" name="Science">
        <title>Empirical analysis of transcriptional activity in the Arabidopsis genome.</title>
        <authorList>
            <person name="Yamada K."/>
            <person name="Lim J."/>
            <person name="Dale J.M."/>
            <person name="Chen H."/>
            <person name="Shinn P."/>
            <person name="Palm C.J."/>
            <person name="Southwick A.M."/>
            <person name="Wu H.C."/>
            <person name="Kim C.J."/>
            <person name="Nguyen M."/>
            <person name="Pham P.K."/>
            <person name="Cheuk R.F."/>
            <person name="Karlin-Newmann G."/>
            <person name="Liu S.X."/>
            <person name="Lam B."/>
            <person name="Sakano H."/>
            <person name="Wu T."/>
            <person name="Yu G."/>
            <person name="Miranda M."/>
            <person name="Quach H.L."/>
            <person name="Tripp M."/>
            <person name="Chang C.H."/>
            <person name="Lee J.M."/>
            <person name="Toriumi M.J."/>
            <person name="Chan M.M."/>
            <person name="Tang C.C."/>
            <person name="Onodera C.S."/>
            <person name="Deng J.M."/>
            <person name="Akiyama K."/>
            <person name="Ansari Y."/>
            <person name="Arakawa T."/>
            <person name="Banh J."/>
            <person name="Banno F."/>
            <person name="Bowser L."/>
            <person name="Brooks S.Y."/>
            <person name="Carninci P."/>
            <person name="Chao Q."/>
            <person name="Choy N."/>
            <person name="Enju A."/>
            <person name="Goldsmith A.D."/>
            <person name="Gurjal M."/>
            <person name="Hansen N.F."/>
            <person name="Hayashizaki Y."/>
            <person name="Johnson-Hopson C."/>
            <person name="Hsuan V.W."/>
            <person name="Iida K."/>
            <person name="Karnes M."/>
            <person name="Khan S."/>
            <person name="Koesema E."/>
            <person name="Ishida J."/>
            <person name="Jiang P.X."/>
            <person name="Jones T."/>
            <person name="Kawai J."/>
            <person name="Kamiya A."/>
            <person name="Meyers C."/>
            <person name="Nakajima M."/>
            <person name="Narusaka M."/>
            <person name="Seki M."/>
            <person name="Sakurai T."/>
            <person name="Satou M."/>
            <person name="Tamse R."/>
            <person name="Vaysberg M."/>
            <person name="Wallender E.K."/>
            <person name="Wong C."/>
            <person name="Yamamura Y."/>
            <person name="Yuan S."/>
            <person name="Shinozaki K."/>
            <person name="Davis R.W."/>
            <person name="Theologis A."/>
            <person name="Ecker J.R."/>
        </authorList>
    </citation>
    <scope>NUCLEOTIDE SEQUENCE [LARGE SCALE MRNA]</scope>
    <source>
        <strain>cv. Columbia</strain>
    </source>
</reference>
<reference key="7">
    <citation type="journal article" date="1989" name="Plant Physiol.">
        <title>In vivo inhibition of seed development and reserve protein accumulation in recombinants of abscisic acid biosynthesis and responsiveness mutants in Arabidopsis thaliana.</title>
        <authorList>
            <person name="Koornneef M."/>
            <person name="Hanhart C.J."/>
            <person name="Hilhorst H.W."/>
            <person name="Karssen C.M."/>
        </authorList>
    </citation>
    <scope>DISRUPTION PHENOTYPE</scope>
</reference>
<reference key="8">
    <citation type="journal article" date="1998" name="Plant Cell">
        <title>Arabidopsis mutants define a central role for the xanthophyll cycle in the regulation of photosynthetic energy conversion.</title>
        <authorList>
            <person name="Niyogi K.K."/>
            <person name="Grossman A.R."/>
            <person name="Bjoerkman O."/>
        </authorList>
    </citation>
    <scope>FUNCTION</scope>
</reference>
<reference key="9">
    <citation type="journal article" date="2001" name="Development">
        <title>Sequential steps for developmental arrest in Arabidopsis seeds.</title>
        <authorList>
            <person name="Raz V."/>
            <person name="Bergervoet J.H."/>
            <person name="Koornneef M."/>
        </authorList>
    </citation>
    <scope>DISRUPTION PHENOTYPE</scope>
</reference>
<reference key="10">
    <citation type="journal article" date="2001" name="Proc. Natl. Acad. Sci. U.S.A.">
        <title>The role of ABA and the transpiration stream in the regulation of the osmotic water permeability of leaf cells.</title>
        <authorList>
            <person name="Morillon R."/>
            <person name="Chrispeels M.J."/>
        </authorList>
    </citation>
    <scope>DISRUPTION PHENOTYPE</scope>
</reference>
<reference key="11">
    <citation type="journal article" date="2002" name="J. Biol. Chem.">
        <title>Regulation of osmotic stress-responsive gene expression by the LOS6/ABA1 locus in Arabidopsis.</title>
        <authorList>
            <person name="Xiong L."/>
            <person name="Lee H."/>
            <person name="Ishitani M."/>
            <person name="Zhu J.-K."/>
        </authorList>
    </citation>
    <scope>FUNCTION</scope>
    <scope>TISSUE SPECIFICITY</scope>
    <scope>INDUCTION</scope>
    <scope>DISRUPTION PHENOTYPE</scope>
    <scope>MUTAGENESIS OF GLY-386</scope>
</reference>
<reference key="12">
    <citation type="journal article" date="2002" name="Planta">
        <title>Hydrotropism in abscisic acid, wavy, and gravitropic mutants of Arabidopsis thaliana.</title>
        <authorList>
            <person name="Takahashi N."/>
            <person name="Goto N."/>
            <person name="Okada K."/>
            <person name="Takahashi H."/>
        </authorList>
    </citation>
    <scope>FUNCTION</scope>
</reference>
<reference key="13">
    <citation type="journal article" date="2002" name="Plant J.">
        <title>Use of infrared thermal imaging to isolate Arabidopsis mutants defective in stomatal regulation.</title>
        <authorList>
            <person name="Merlot S."/>
            <person name="Mustilli A.-C."/>
            <person name="Genty B."/>
            <person name="North H."/>
            <person name="Lefebvre V."/>
            <person name="Sotta B."/>
            <person name="Vavasseur A."/>
            <person name="Giraudat J."/>
        </authorList>
    </citation>
    <scope>DISRUPTION PHENOTYPE</scope>
</reference>
<reference key="14">
    <citation type="journal article" date="2004" name="J. Biol. Chem.">
        <title>The effect of zeaxanthin as the only xanthophyll on the structure and function of the photosynthetic apparatus in Arabidopsis thaliana.</title>
        <authorList>
            <person name="Havaux M."/>
            <person name="Dall'Osto L."/>
            <person name="Cuine S."/>
            <person name="Giuliano G."/>
            <person name="Bassi R."/>
        </authorList>
    </citation>
    <scope>FUNCTION</scope>
</reference>
<reference key="15">
    <citation type="journal article" date="2004" name="Plant Cell">
        <title>Antagonistic interaction between abscisic acid and jasmonate-ethylene signaling pathways modulates defense gene expression and disease resistance in Arabidopsis.</title>
        <authorList>
            <person name="Anderson J.P."/>
            <person name="Badruzsaufari E."/>
            <person name="Schenk P.M."/>
            <person name="Manners J.M."/>
            <person name="Desmond O.J."/>
            <person name="Ehlert C."/>
            <person name="Maclean D.J."/>
            <person name="Ebert P.R."/>
            <person name="Kazan K."/>
        </authorList>
    </citation>
    <scope>FUNCTION</scope>
    <scope>DISRUPTION PHENOTYPE</scope>
</reference>
<reference key="16">
    <citation type="journal article" date="2004" name="Plant J.">
        <title>Beta-amino-butyric acid-induced resistance against necrotrophic pathogens is based on ABA-dependent priming for callose.</title>
        <authorList>
            <person name="Ton J."/>
            <person name="Mauch-Mani B."/>
        </authorList>
    </citation>
    <scope>FUNCTION</scope>
</reference>
<reference key="17">
    <citation type="journal article" date="2005" name="J. Exp. Bot.">
        <title>A mutational analysis of the ABA1 gene of Arabidopsis thaliana highlights the involvement of ABA in vegetative development.</title>
        <authorList>
            <person name="Barrero J.M."/>
            <person name="Piqueras P."/>
            <person name="Gonzalez-Guzman M."/>
            <person name="Serrano R."/>
            <person name="Rodriguez P.L."/>
            <person name="Ponce M.R."/>
            <person name="Micol J.L."/>
        </authorList>
    </citation>
    <scope>FUNCTION</scope>
    <scope>DISRUPTION PHENOTYPE</scope>
</reference>
<reference key="18">
    <citation type="journal article" date="2005" name="Plant Cell">
        <title>Dissecting the beta-aminobutyric acid-induced priming phenomenon in Arabidopsis.</title>
        <authorList>
            <person name="Ton J."/>
            <person name="Jakab G."/>
            <person name="Toquin V."/>
            <person name="Flors V."/>
            <person name="Iavicoli A."/>
            <person name="Maeder M.N."/>
            <person name="Metraux J.-P."/>
            <person name="Mauch-Mani B."/>
        </authorList>
    </citation>
    <scope>FUNCTION</scope>
    <scope>DISRUPTION PHENOTYPE</scope>
</reference>
<reference key="19">
    <citation type="journal article" date="2005" name="Plant Physiol.">
        <title>Enhancing Arabidopsis salt and drought stress tolerance by chemical priming for its abscisic acid responses.</title>
        <authorList>
            <person name="Jakab G."/>
            <person name="Ton J."/>
            <person name="Flors V."/>
            <person name="Zimmerli L."/>
            <person name="Metraux J.-P."/>
            <person name="Mauch-Mani B."/>
        </authorList>
    </citation>
    <scope>FUNCTION</scope>
</reference>
<reference key="20">
    <citation type="journal article" date="2007" name="Plant Physiol.">
        <title>The transiently generated nonphotochemical quenching of excitation energy in Arabidopsis leaves is modulated by zeaxanthin.</title>
        <authorList>
            <person name="Kalituho L."/>
            <person name="Beran K.C."/>
            <person name="Jahns P."/>
        </authorList>
    </citation>
    <scope>FUNCTION</scope>
</reference>
<reference key="21">
    <citation type="journal article" date="2008" name="Biochem. Biophys. Res. Commun.">
        <title>Overexpression of Arabidopsis ZEP enhances tolerance to osmotic stress.</title>
        <authorList>
            <person name="Park H.Y."/>
            <person name="Seok H.Y."/>
            <person name="Park B.K."/>
            <person name="Kim S.H."/>
            <person name="Goh C.H."/>
            <person name="Lee B.H."/>
            <person name="Lee C.H."/>
            <person name="Moon Y.H."/>
        </authorList>
    </citation>
    <scope>FUNCTION</scope>
</reference>
<reference key="22">
    <citation type="journal article" date="2008" name="Plant Cell Environ.">
        <title>The ABA1 gene and carotenoid biosynthesis are required for late skotomorphogenic growth in Arabidopsis thaliana.</title>
        <authorList>
            <person name="Barrero J.M."/>
            <person name="Rodriguez P.L."/>
            <person name="Quesada V."/>
            <person name="Alabadi D."/>
            <person name="Blazquez M.A."/>
            <person name="Boutin J.P."/>
            <person name="Marion-Poll A."/>
            <person name="Ponce M.R."/>
            <person name="Micol J.L."/>
        </authorList>
    </citation>
    <scope>FUNCTION</scope>
</reference>
<reference key="23">
    <citation type="journal article" date="2009" name="J. Plant Physiol.">
        <title>New transgenic line of Arabidopsis thaliana with partly disabled zeaxanthin epoxidase activity displays changed carotenoid composition, xanthophyll cycle activity and non-photochemical quenching kinetics.</title>
        <authorList>
            <person name="Nowicka B."/>
            <person name="Strzalka W."/>
            <person name="Strzalka K."/>
        </authorList>
    </citation>
    <scope>FUNCTION</scope>
</reference>
<name>ZEP_ARATH</name>
<proteinExistence type="evidence at protein level"/>